<reference key="1">
    <citation type="journal article" date="2005" name="Mol. Reprod. Dev.">
        <title>Bovine mater-like NALP9 is an oocyte marker gene.</title>
        <authorList>
            <person name="Dalbies-Tran R."/>
            <person name="Papillier P."/>
            <person name="Pennetier S."/>
            <person name="Uzbekova S."/>
            <person name="Monget P."/>
        </authorList>
    </citation>
    <scope>NUCLEOTIDE SEQUENCE [MRNA]</scope>
    <scope>TISSUE SPECIFICITY</scope>
</reference>
<reference key="2">
    <citation type="journal article" date="2006" name="Biol. Reprod.">
        <title>Bovine NALP5, NALP8, and NALP9 genes: assignment to a QTL region and the expression in adult tissues, oocytes, and preimplantation embryos.</title>
        <authorList>
            <person name="Ponsuksili S."/>
            <person name="Brunner R.M."/>
            <person name="Goldammer T."/>
            <person name="Kuhn C."/>
            <person name="Walz C."/>
            <person name="Chomdej S."/>
            <person name="Tesfaye D."/>
            <person name="Schellander K."/>
            <person name="Wimmers K."/>
            <person name="Schwerin M."/>
        </authorList>
    </citation>
    <scope>NUCLEOTIDE SEQUENCE [MRNA]</scope>
    <scope>TISSUE SPECIFICITY</scope>
    <source>
        <tissue>Oocyte</tissue>
    </source>
</reference>
<accession>Q288C4</accession>
<accession>Q4U4S5</accession>
<gene>
    <name type="primary">NLRP9</name>
    <name type="synonym">NALP9</name>
</gene>
<sequence length="996" mass="114162">MAESFFSDFGLLWYLEELKKEEFWKFKELLKQEPLKLKLKPIPWTELKKASRENVSKLLSKHYPGKLAWDVTLNLFLQISRDDLWRKARNEIRQKINPYRSHMKQKFQVLWEKEPCLLVPEDFYEETTKIEYELLSTVYLDAFKPGESSPTVVLHGPEGIGKTTFLRKVMLEWAKGNLWRDRFSFVFFLTGREMNGVTDMSLVELLSRDWPESSEPIEDIFSQPERILFILDGMEELKFDLDCNADLCEDWEQPQSMQVVLQSLLQKQMLPECSLLLALSKMGMRKNYSLLKHMKCIFLLGFSEHQRKLYFSHYFQEKDASSRAFSFVREKSSLFVLCQSPFLCWLVCTSLKCQLEKGEDLELDSETITGLYVSFFTKVFRSGSETCPLKQRRARLKSLCTLAAEGMWTCTFLFCPEDLRRNGVSESDTSMWLDMKLLHRSGDCLAFIHTCIQEFCAAMFYMFTRPKDPPHSVIGNVTQLITRAVSGHYSRLSWTAVFLFVFSTERMTHRLETSFGFPLSKEIKQEITQSLDTLSQCDPNNVMMSFQALFNCLFETQDPEFVAQVVNFFKDIDIYIGTKEELIICAACLRHCHSLQKFHLCMEHVFPDESGCISNTIEKLTLWRDVCSAFAASEDFEILNLDNCRFDEPSLAVLCRTLSQPVCKLRKFVCNFASNLANSLELFKVILHNPHLKHLNFYGSSLSHMDARQLCEALKHPMCNIEELMLGKCDITGEACEDIASVLVHNKKLNLLSLCENALKDDGVLVLCEALKNPDCALEALLLSHCCFSSAACDHLSQVLLYNRSLTFLDLGSNVLKDEGVTTLCESLKHPSCNLQELWLMNCYFTSVCCVDIATVLIHSEKLKTLKLGNNKIYDAGAKQLCKALKHPKCKLENLGLEACELSPASCEDLASALTTCKSLTCVNLEWITLDYDGAAVLCEALVSLECSLQLLGLNKSSYDEEIKMMLTQVEEMNPNLIISHHLWTDDEGRRRGILV</sequence>
<evidence type="ECO:0000250" key="1">
    <source>
        <dbReference type="UniProtKB" id="Q66X22"/>
    </source>
</evidence>
<evidence type="ECO:0000250" key="2">
    <source>
        <dbReference type="UniProtKB" id="Q7RTR0"/>
    </source>
</evidence>
<evidence type="ECO:0000255" key="3">
    <source>
        <dbReference type="PROSITE-ProRule" id="PRU00061"/>
    </source>
</evidence>
<evidence type="ECO:0000255" key="4">
    <source>
        <dbReference type="PROSITE-ProRule" id="PRU00136"/>
    </source>
</evidence>
<evidence type="ECO:0000269" key="5">
    <source>
    </source>
</evidence>
<evidence type="ECO:0000269" key="6">
    <source>
    </source>
</evidence>
<evidence type="ECO:0000305" key="7"/>
<evidence type="ECO:0007829" key="8">
    <source>
        <dbReference type="PDB" id="7WBT"/>
    </source>
</evidence>
<evidence type="ECO:0007829" key="9">
    <source>
        <dbReference type="PDB" id="7WBU"/>
    </source>
</evidence>
<proteinExistence type="evidence at protein level"/>
<feature type="chain" id="PRO_0000286333" description="NACHT, LRR and PYD domains-containing protein 9">
    <location>
        <begin position="1"/>
        <end position="996"/>
    </location>
</feature>
<feature type="domain" description="Pyrin" evidence="3">
    <location>
        <begin position="1"/>
        <end position="94"/>
    </location>
</feature>
<feature type="domain" description="NACHT" evidence="4">
    <location>
        <begin position="150"/>
        <end position="469"/>
    </location>
</feature>
<feature type="repeat" description="LRR 1">
    <location>
        <begin position="748"/>
        <end position="769"/>
    </location>
</feature>
<feature type="repeat" description="LRR 2">
    <location>
        <begin position="777"/>
        <end position="798"/>
    </location>
</feature>
<feature type="repeat" description="LRR 3">
    <location>
        <begin position="805"/>
        <end position="825"/>
    </location>
</feature>
<feature type="repeat" description="LRR 4">
    <location>
        <begin position="834"/>
        <end position="855"/>
    </location>
</feature>
<feature type="repeat" description="LRR 5">
    <location>
        <begin position="862"/>
        <end position="883"/>
    </location>
</feature>
<feature type="repeat" description="LRR 6">
    <location>
        <begin position="891"/>
        <end position="914"/>
    </location>
</feature>
<feature type="binding site" evidence="4">
    <location>
        <begin position="156"/>
        <end position="163"/>
    </location>
    <ligand>
        <name>ATP</name>
        <dbReference type="ChEBI" id="CHEBI:30616"/>
    </ligand>
</feature>
<feature type="sequence conflict" description="In Ref. 1; AAY33775." evidence="7" ref="1">
    <original>A</original>
    <variation>T</variation>
    <location>
        <position position="245"/>
    </location>
</feature>
<feature type="sequence conflict" description="In Ref. 1; AAY33775." evidence="7" ref="1">
    <original>G</original>
    <variation>E</variation>
    <location>
        <position position="487"/>
    </location>
</feature>
<feature type="sequence conflict" description="In Ref. 1; AAY33775." evidence="7" ref="1">
    <original>A</original>
    <variation>T</variation>
    <location>
        <position position="631"/>
    </location>
</feature>
<feature type="sequence conflict" description="In Ref. 1; AAY33775." evidence="7" ref="1">
    <original>E</original>
    <variation>D</variation>
    <location>
        <position position="756"/>
    </location>
</feature>
<feature type="helix" evidence="8">
    <location>
        <begin position="98"/>
        <end position="113"/>
    </location>
</feature>
<feature type="strand" evidence="8">
    <location>
        <begin position="114"/>
        <end position="117"/>
    </location>
</feature>
<feature type="helix" evidence="8">
    <location>
        <begin position="121"/>
        <end position="127"/>
    </location>
</feature>
<feature type="helix" evidence="8">
    <location>
        <begin position="129"/>
        <end position="139"/>
    </location>
</feature>
<feature type="strand" evidence="8">
    <location>
        <begin position="151"/>
        <end position="155"/>
    </location>
</feature>
<feature type="helix" evidence="8">
    <location>
        <begin position="162"/>
        <end position="174"/>
    </location>
</feature>
<feature type="strand" evidence="8">
    <location>
        <begin position="177"/>
        <end position="179"/>
    </location>
</feature>
<feature type="turn" evidence="8">
    <location>
        <begin position="180"/>
        <end position="182"/>
    </location>
</feature>
<feature type="strand" evidence="8">
    <location>
        <begin position="184"/>
        <end position="190"/>
    </location>
</feature>
<feature type="helix" evidence="8">
    <location>
        <begin position="191"/>
        <end position="195"/>
    </location>
</feature>
<feature type="helix" evidence="8">
    <location>
        <begin position="202"/>
        <end position="208"/>
    </location>
</feature>
<feature type="strand" evidence="8">
    <location>
        <begin position="212"/>
        <end position="214"/>
    </location>
</feature>
<feature type="helix" evidence="8">
    <location>
        <begin position="217"/>
        <end position="220"/>
    </location>
</feature>
<feature type="helix" evidence="8">
    <location>
        <begin position="224"/>
        <end position="226"/>
    </location>
</feature>
<feature type="strand" evidence="8">
    <location>
        <begin position="227"/>
        <end position="232"/>
    </location>
</feature>
<feature type="helix" evidence="8">
    <location>
        <begin position="234"/>
        <end position="236"/>
    </location>
</feature>
<feature type="strand" evidence="8">
    <location>
        <begin position="243"/>
        <end position="245"/>
    </location>
</feature>
<feature type="strand" evidence="8">
    <location>
        <begin position="251"/>
        <end position="253"/>
    </location>
</feature>
<feature type="helix" evidence="8">
    <location>
        <begin position="257"/>
        <end position="266"/>
    </location>
</feature>
<feature type="strand" evidence="8">
    <location>
        <begin position="268"/>
        <end position="270"/>
    </location>
</feature>
<feature type="strand" evidence="8">
    <location>
        <begin position="273"/>
        <end position="279"/>
    </location>
</feature>
<feature type="helix" evidence="8">
    <location>
        <begin position="281"/>
        <end position="287"/>
    </location>
</feature>
<feature type="turn" evidence="8">
    <location>
        <begin position="288"/>
        <end position="290"/>
    </location>
</feature>
<feature type="strand" evidence="8">
    <location>
        <begin position="293"/>
        <end position="298"/>
    </location>
</feature>
<feature type="helix" evidence="8">
    <location>
        <begin position="304"/>
        <end position="314"/>
    </location>
</feature>
<feature type="strand" evidence="8">
    <location>
        <begin position="315"/>
        <end position="318"/>
    </location>
</feature>
<feature type="helix" evidence="8">
    <location>
        <begin position="319"/>
        <end position="330"/>
    </location>
</feature>
<feature type="helix" evidence="8">
    <location>
        <begin position="332"/>
        <end position="337"/>
    </location>
</feature>
<feature type="helix" evidence="8">
    <location>
        <begin position="341"/>
        <end position="357"/>
    </location>
</feature>
<feature type="helix" evidence="8">
    <location>
        <begin position="368"/>
        <end position="383"/>
    </location>
</feature>
<feature type="strand" evidence="8">
    <location>
        <begin position="385"/>
        <end position="387"/>
    </location>
</feature>
<feature type="helix" evidence="8">
    <location>
        <begin position="389"/>
        <end position="408"/>
    </location>
</feature>
<feature type="helix" evidence="8">
    <location>
        <begin position="416"/>
        <end position="421"/>
    </location>
</feature>
<feature type="helix" evidence="8">
    <location>
        <begin position="426"/>
        <end position="434"/>
    </location>
</feature>
<feature type="strand" evidence="8">
    <location>
        <begin position="437"/>
        <end position="448"/>
    </location>
</feature>
<feature type="helix" evidence="8">
    <location>
        <begin position="450"/>
        <end position="461"/>
    </location>
</feature>
<feature type="strand" evidence="9">
    <location>
        <begin position="466"/>
        <end position="468"/>
    </location>
</feature>
<feature type="strand" evidence="8">
    <location>
        <begin position="472"/>
        <end position="474"/>
    </location>
</feature>
<feature type="helix" evidence="8">
    <location>
        <begin position="477"/>
        <end position="485"/>
    </location>
</feature>
<feature type="turn" evidence="8">
    <location>
        <begin position="487"/>
        <end position="489"/>
    </location>
</feature>
<feature type="helix" evidence="8">
    <location>
        <begin position="493"/>
        <end position="502"/>
    </location>
</feature>
<feature type="helix" evidence="8">
    <location>
        <begin position="505"/>
        <end position="515"/>
    </location>
</feature>
<feature type="helix" evidence="8">
    <location>
        <begin position="523"/>
        <end position="536"/>
    </location>
</feature>
<feature type="helix" evidence="8">
    <location>
        <begin position="539"/>
        <end position="542"/>
    </location>
</feature>
<feature type="helix" evidence="8">
    <location>
        <begin position="546"/>
        <end position="556"/>
    </location>
</feature>
<feature type="helix" evidence="8">
    <location>
        <begin position="559"/>
        <end position="566"/>
    </location>
</feature>
<feature type="strand" evidence="8">
    <location>
        <begin position="570"/>
        <end position="576"/>
    </location>
</feature>
<feature type="helix" evidence="8">
    <location>
        <begin position="579"/>
        <end position="589"/>
    </location>
</feature>
<feature type="strand" evidence="8">
    <location>
        <begin position="596"/>
        <end position="602"/>
    </location>
</feature>
<feature type="strand" evidence="9">
    <location>
        <begin position="606"/>
        <end position="609"/>
    </location>
</feature>
<feature type="helix" evidence="8">
    <location>
        <begin position="611"/>
        <end position="614"/>
    </location>
</feature>
<feature type="helix" evidence="8">
    <location>
        <begin position="617"/>
        <end position="632"/>
    </location>
</feature>
<feature type="strand" evidence="8">
    <location>
        <begin position="638"/>
        <end position="643"/>
    </location>
</feature>
<feature type="helix" evidence="8">
    <location>
        <begin position="648"/>
        <end position="659"/>
    </location>
</feature>
<feature type="strand" evidence="8">
    <location>
        <begin position="667"/>
        <end position="672"/>
    </location>
</feature>
<feature type="helix" evidence="8">
    <location>
        <begin position="676"/>
        <end position="688"/>
    </location>
</feature>
<feature type="strand" evidence="8">
    <location>
        <begin position="694"/>
        <end position="696"/>
    </location>
</feature>
<feature type="helix" evidence="8">
    <location>
        <begin position="704"/>
        <end position="714"/>
    </location>
</feature>
<feature type="strand" evidence="8">
    <location>
        <begin position="723"/>
        <end position="725"/>
    </location>
</feature>
<feature type="helix" evidence="8">
    <location>
        <begin position="733"/>
        <end position="745"/>
    </location>
</feature>
<feature type="strand" evidence="8">
    <location>
        <begin position="751"/>
        <end position="753"/>
    </location>
</feature>
<feature type="helix" evidence="8">
    <location>
        <begin position="762"/>
        <end position="772"/>
    </location>
</feature>
<feature type="strand" evidence="8">
    <location>
        <begin position="780"/>
        <end position="782"/>
    </location>
</feature>
<feature type="helix" evidence="8">
    <location>
        <begin position="790"/>
        <end position="802"/>
    </location>
</feature>
<feature type="strand" evidence="8">
    <location>
        <begin position="808"/>
        <end position="810"/>
    </location>
</feature>
<feature type="helix" evidence="8">
    <location>
        <begin position="819"/>
        <end position="828"/>
    </location>
</feature>
<feature type="strand" evidence="8">
    <location>
        <begin position="837"/>
        <end position="839"/>
    </location>
</feature>
<feature type="helix" evidence="8">
    <location>
        <begin position="847"/>
        <end position="849"/>
    </location>
</feature>
<feature type="helix" evidence="8">
    <location>
        <begin position="850"/>
        <end position="859"/>
    </location>
</feature>
<feature type="strand" evidence="8">
    <location>
        <begin position="865"/>
        <end position="867"/>
    </location>
</feature>
<feature type="helix" evidence="8">
    <location>
        <begin position="876"/>
        <end position="885"/>
    </location>
</feature>
<feature type="strand" evidence="8">
    <location>
        <begin position="894"/>
        <end position="896"/>
    </location>
</feature>
<feature type="helix" evidence="8">
    <location>
        <begin position="906"/>
        <end position="914"/>
    </location>
</feature>
<feature type="strand" evidence="8">
    <location>
        <begin position="922"/>
        <end position="924"/>
    </location>
</feature>
<feature type="helix" evidence="8">
    <location>
        <begin position="932"/>
        <end position="942"/>
    </location>
</feature>
<feature type="strand" evidence="8">
    <location>
        <begin position="950"/>
        <end position="953"/>
    </location>
</feature>
<feature type="strand" evidence="9">
    <location>
        <begin position="956"/>
        <end position="959"/>
    </location>
</feature>
<feature type="helix" evidence="8">
    <location>
        <begin position="961"/>
        <end position="973"/>
    </location>
</feature>
<feature type="strand" evidence="8">
    <location>
        <begin position="978"/>
        <end position="982"/>
    </location>
</feature>
<feature type="helix" evidence="8">
    <location>
        <begin position="985"/>
        <end position="992"/>
    </location>
</feature>
<dbReference type="EMBL" id="DQ011673">
    <property type="protein sequence ID" value="AAY33775.1"/>
    <property type="molecule type" value="mRNA"/>
</dbReference>
<dbReference type="EMBL" id="DQ092866">
    <property type="protein sequence ID" value="AAY90149.1"/>
    <property type="molecule type" value="mRNA"/>
</dbReference>
<dbReference type="RefSeq" id="NP_001019835.1">
    <property type="nucleotide sequence ID" value="NM_001024664.1"/>
</dbReference>
<dbReference type="PDB" id="7WBT">
    <property type="method" value="X-ray"/>
    <property type="resolution" value="2.75 A"/>
    <property type="chains" value="A/B=89-996"/>
</dbReference>
<dbReference type="PDB" id="7WBU">
    <property type="method" value="EM"/>
    <property type="resolution" value="3.42 A"/>
    <property type="chains" value="A=89-996"/>
</dbReference>
<dbReference type="PDBsum" id="7WBT"/>
<dbReference type="PDBsum" id="7WBU"/>
<dbReference type="EMDB" id="EMD-32406"/>
<dbReference type="SMR" id="Q288C4"/>
<dbReference type="FunCoup" id="Q288C4">
    <property type="interactions" value="11"/>
</dbReference>
<dbReference type="STRING" id="9913.ENSBTAP00000006201"/>
<dbReference type="PaxDb" id="9913-ENSBTAP00000006201"/>
<dbReference type="GeneID" id="520716"/>
<dbReference type="KEGG" id="bta:520716"/>
<dbReference type="CTD" id="338321"/>
<dbReference type="eggNOG" id="KOG4308">
    <property type="taxonomic scope" value="Eukaryota"/>
</dbReference>
<dbReference type="InParanoid" id="Q288C4"/>
<dbReference type="OrthoDB" id="120976at2759"/>
<dbReference type="Proteomes" id="UP000009136">
    <property type="component" value="Unplaced"/>
</dbReference>
<dbReference type="GO" id="GO:0061702">
    <property type="term" value="C:canonical inflammasome complex"/>
    <property type="evidence" value="ECO:0000318"/>
    <property type="project" value="GO_Central"/>
</dbReference>
<dbReference type="GO" id="GO:0005737">
    <property type="term" value="C:cytoplasm"/>
    <property type="evidence" value="ECO:0000318"/>
    <property type="project" value="GO_Central"/>
</dbReference>
<dbReference type="GO" id="GO:0005524">
    <property type="term" value="F:ATP binding"/>
    <property type="evidence" value="ECO:0007669"/>
    <property type="project" value="UniProtKB-KW"/>
</dbReference>
<dbReference type="GO" id="GO:0006954">
    <property type="term" value="P:inflammatory response"/>
    <property type="evidence" value="ECO:0007669"/>
    <property type="project" value="UniProtKB-KW"/>
</dbReference>
<dbReference type="GO" id="GO:0045087">
    <property type="term" value="P:innate immune response"/>
    <property type="evidence" value="ECO:0007669"/>
    <property type="project" value="UniProtKB-KW"/>
</dbReference>
<dbReference type="GO" id="GO:0050727">
    <property type="term" value="P:regulation of inflammatory response"/>
    <property type="evidence" value="ECO:0000318"/>
    <property type="project" value="GO_Central"/>
</dbReference>
<dbReference type="CDD" id="cd08320">
    <property type="entry name" value="Pyrin_NALPs"/>
    <property type="match status" value="1"/>
</dbReference>
<dbReference type="FunFam" id="1.10.533.10:FF:000056">
    <property type="entry name" value="NACHT, LRR and PYD domains-containing protein 14"/>
    <property type="match status" value="1"/>
</dbReference>
<dbReference type="FunFam" id="3.40.50.300:FF:000442">
    <property type="entry name" value="NACHT, LRR and PYD domains-containing protein 3"/>
    <property type="match status" value="1"/>
</dbReference>
<dbReference type="Gene3D" id="1.10.533.10">
    <property type="entry name" value="Death Domain, Fas"/>
    <property type="match status" value="1"/>
</dbReference>
<dbReference type="Gene3D" id="3.40.50.300">
    <property type="entry name" value="P-loop containing nucleotide triphosphate hydrolases"/>
    <property type="match status" value="1"/>
</dbReference>
<dbReference type="Gene3D" id="3.80.10.10">
    <property type="entry name" value="Ribonuclease Inhibitor"/>
    <property type="match status" value="1"/>
</dbReference>
<dbReference type="InterPro" id="IPR004020">
    <property type="entry name" value="DAPIN"/>
</dbReference>
<dbReference type="InterPro" id="IPR011029">
    <property type="entry name" value="DEATH-like_dom_sf"/>
</dbReference>
<dbReference type="InterPro" id="IPR001611">
    <property type="entry name" value="Leu-rich_rpt"/>
</dbReference>
<dbReference type="InterPro" id="IPR032675">
    <property type="entry name" value="LRR_dom_sf"/>
</dbReference>
<dbReference type="InterPro" id="IPR007111">
    <property type="entry name" value="NACHT_NTPase"/>
</dbReference>
<dbReference type="InterPro" id="IPR041267">
    <property type="entry name" value="NLRP_HD2"/>
</dbReference>
<dbReference type="InterPro" id="IPR050637">
    <property type="entry name" value="NLRP_innate_immun_reg"/>
</dbReference>
<dbReference type="InterPro" id="IPR041075">
    <property type="entry name" value="NOD1/2_WH"/>
</dbReference>
<dbReference type="InterPro" id="IPR027417">
    <property type="entry name" value="P-loop_NTPase"/>
</dbReference>
<dbReference type="PANTHER" id="PTHR45690">
    <property type="entry name" value="NACHT, LRR AND PYD DOMAINS-CONTAINING PROTEIN 12"/>
    <property type="match status" value="1"/>
</dbReference>
<dbReference type="PANTHER" id="PTHR45690:SF13">
    <property type="entry name" value="NACHT, LRR AND PYD DOMAINS-CONTAINING PROTEIN 9"/>
    <property type="match status" value="1"/>
</dbReference>
<dbReference type="Pfam" id="PF13516">
    <property type="entry name" value="LRR_6"/>
    <property type="match status" value="2"/>
</dbReference>
<dbReference type="Pfam" id="PF05729">
    <property type="entry name" value="NACHT"/>
    <property type="match status" value="1"/>
</dbReference>
<dbReference type="Pfam" id="PF17776">
    <property type="entry name" value="NLRC4_HD2"/>
    <property type="match status" value="1"/>
</dbReference>
<dbReference type="Pfam" id="PF17779">
    <property type="entry name" value="NOD2_WH"/>
    <property type="match status" value="1"/>
</dbReference>
<dbReference type="Pfam" id="PF02758">
    <property type="entry name" value="PYRIN"/>
    <property type="match status" value="1"/>
</dbReference>
<dbReference type="SMART" id="SM00368">
    <property type="entry name" value="LRR_RI"/>
    <property type="match status" value="9"/>
</dbReference>
<dbReference type="SMART" id="SM01289">
    <property type="entry name" value="PYRIN"/>
    <property type="match status" value="1"/>
</dbReference>
<dbReference type="SUPFAM" id="SSF47986">
    <property type="entry name" value="DEATH domain"/>
    <property type="match status" value="1"/>
</dbReference>
<dbReference type="SUPFAM" id="SSF52540">
    <property type="entry name" value="P-loop containing nucleoside triphosphate hydrolases"/>
    <property type="match status" value="1"/>
</dbReference>
<dbReference type="SUPFAM" id="SSF52047">
    <property type="entry name" value="RNI-like"/>
    <property type="match status" value="1"/>
</dbReference>
<dbReference type="PROSITE" id="PS50824">
    <property type="entry name" value="DAPIN"/>
    <property type="match status" value="1"/>
</dbReference>
<dbReference type="PROSITE" id="PS50837">
    <property type="entry name" value="NACHT"/>
    <property type="match status" value="1"/>
</dbReference>
<name>NLRP9_BOVIN</name>
<protein>
    <recommendedName>
        <fullName>NACHT, LRR and PYD domains-containing protein 9</fullName>
    </recommendedName>
</protein>
<organism>
    <name type="scientific">Bos taurus</name>
    <name type="common">Bovine</name>
    <dbReference type="NCBI Taxonomy" id="9913"/>
    <lineage>
        <taxon>Eukaryota</taxon>
        <taxon>Metazoa</taxon>
        <taxon>Chordata</taxon>
        <taxon>Craniata</taxon>
        <taxon>Vertebrata</taxon>
        <taxon>Euteleostomi</taxon>
        <taxon>Mammalia</taxon>
        <taxon>Eutheria</taxon>
        <taxon>Laurasiatheria</taxon>
        <taxon>Artiodactyla</taxon>
        <taxon>Ruminantia</taxon>
        <taxon>Pecora</taxon>
        <taxon>Bovidae</taxon>
        <taxon>Bovinae</taxon>
        <taxon>Bos</taxon>
    </lineage>
</organism>
<comment type="function">
    <text evidence="2">As the sensor component of the NLRP9 inflammasome, plays a crucial role in innate immunity and inflammation. In response to pathogens, including rotavirus, initiates the formation of the inflammasome polymeric complex, made of NLRP9, PYCARD and CASP1. Recruitment of proCASP1 to the inflammasome promotes its activation and CASP1-catalyzed IL1B and IL18 maturation and release in the extracellular milieu. The active cytokines stimulate inflammatory responses. Inflammasomes can also induce pyroptosis, an inflammatory form of programmed cell death. NLRP9 inflammasome activation may be initiated by DHX9 interaction with viral double-stranded RNA (dsRNA), preferentially to short dsRNA segments.</text>
</comment>
<comment type="subunit">
    <text evidence="2">Sensor component of NLRP9 inflammasomes. Inflammasomes are supramolecular complexes that assemble in the cytosol in response to pathogens, such as rotavirus, and play critical roles in innate immunity and inflammation. The core of NLRP9 inflammasomes consists of a signal sensor component (NLRP9), an adapter (ASC/PYCARD), which recruits an effector pro-inflammatory caspase (CASP1). Within the complex, NLRP9 and PYCARD interact via their respective DAPIN/pyrin domains. This interaction initiates speck formation (nucleation) which greatly enhances further addition of soluble PYCARD molecules to the speck in a prion-like polymerization process. Clustered PYCARD nucleates the formation of CASP1 filaments through the interaction of their respective CARD domains, acting as a platform for CASP1 polymerization. CASP1 filament formation increases local enzyme concentration, resulting in trans-autocleavage and activation. Active CASP1 then processes IL1B and IL18 precursors, leading to the release of mature cytokines in the extracellular milieu and inflammatory response. Interacts with DHX9 upon rotavirus infection; this interaction may trigger inflammasome activation and inflammatory response.</text>
</comment>
<comment type="subcellular location">
    <subcellularLocation>
        <location evidence="1">Cytoplasm</location>
    </subcellularLocation>
    <subcellularLocation>
        <location evidence="2">Inflammasome</location>
    </subcellularLocation>
</comment>
<comment type="tissue specificity">
    <text evidence="5 6">Detected exclusively in testis and ovary, and at high level in the oocyte from antral follicles.</text>
</comment>
<comment type="similarity">
    <text evidence="7">Belongs to the NLRP family.</text>
</comment>
<keyword id="KW-0002">3D-structure</keyword>
<keyword id="KW-0067">ATP-binding</keyword>
<keyword id="KW-0963">Cytoplasm</keyword>
<keyword id="KW-0391">Immunity</keyword>
<keyword id="KW-1271">Inflammasome</keyword>
<keyword id="KW-0395">Inflammatory response</keyword>
<keyword id="KW-0399">Innate immunity</keyword>
<keyword id="KW-0433">Leucine-rich repeat</keyword>
<keyword id="KW-0547">Nucleotide-binding</keyword>
<keyword id="KW-1185">Reference proteome</keyword>
<keyword id="KW-0677">Repeat</keyword>